<proteinExistence type="evidence at protein level"/>
<name>SNX2_MOUSE</name>
<dbReference type="EMBL" id="AK002692">
    <property type="protein sequence ID" value="BAB22287.1"/>
    <property type="molecule type" value="mRNA"/>
</dbReference>
<dbReference type="EMBL" id="AK005470">
    <property type="protein sequence ID" value="BAB24060.1"/>
    <property type="molecule type" value="mRNA"/>
</dbReference>
<dbReference type="EMBL" id="AK010572">
    <property type="protein sequence ID" value="BAB27035.1"/>
    <property type="molecule type" value="mRNA"/>
</dbReference>
<dbReference type="EMBL" id="AK075929">
    <property type="protein sequence ID" value="BAC36060.1"/>
    <property type="molecule type" value="mRNA"/>
</dbReference>
<dbReference type="EMBL" id="AK145840">
    <property type="protein sequence ID" value="BAE26688.1"/>
    <property type="molecule type" value="mRNA"/>
</dbReference>
<dbReference type="CCDS" id="CCDS37821.1"/>
<dbReference type="RefSeq" id="NP_080662.1">
    <property type="nucleotide sequence ID" value="NM_026386.2"/>
</dbReference>
<dbReference type="SMR" id="Q9CWK8"/>
<dbReference type="BioGRID" id="212452">
    <property type="interactions" value="26"/>
</dbReference>
<dbReference type="FunCoup" id="Q9CWK8">
    <property type="interactions" value="3973"/>
</dbReference>
<dbReference type="STRING" id="10090.ENSMUSP00000039243"/>
<dbReference type="GlyGen" id="Q9CWK8">
    <property type="glycosylation" value="2 sites, 1 O-linked glycan (1 site)"/>
</dbReference>
<dbReference type="iPTMnet" id="Q9CWK8"/>
<dbReference type="PhosphoSitePlus" id="Q9CWK8"/>
<dbReference type="jPOST" id="Q9CWK8"/>
<dbReference type="PaxDb" id="10090-ENSMUSP00000039243"/>
<dbReference type="PeptideAtlas" id="Q9CWK8"/>
<dbReference type="ProteomicsDB" id="261543"/>
<dbReference type="Pumba" id="Q9CWK8"/>
<dbReference type="Antibodypedia" id="25631">
    <property type="antibodies" value="183 antibodies from 27 providers"/>
</dbReference>
<dbReference type="DNASU" id="67804"/>
<dbReference type="Ensembl" id="ENSMUST00000037850.7">
    <property type="protein sequence ID" value="ENSMUSP00000039243.5"/>
    <property type="gene ID" value="ENSMUSG00000034484.9"/>
</dbReference>
<dbReference type="GeneID" id="67804"/>
<dbReference type="KEGG" id="mmu:67804"/>
<dbReference type="UCSC" id="uc008exr.1">
    <property type="organism name" value="mouse"/>
</dbReference>
<dbReference type="AGR" id="MGI:1915054"/>
<dbReference type="CTD" id="6643"/>
<dbReference type="MGI" id="MGI:1915054">
    <property type="gene designation" value="Snx2"/>
</dbReference>
<dbReference type="VEuPathDB" id="HostDB:ENSMUSG00000034484"/>
<dbReference type="eggNOG" id="KOG2273">
    <property type="taxonomic scope" value="Eukaryota"/>
</dbReference>
<dbReference type="GeneTree" id="ENSGT00940000155798"/>
<dbReference type="HOGENOM" id="CLU_022783_2_1_1"/>
<dbReference type="InParanoid" id="Q9CWK8"/>
<dbReference type="OMA" id="LWETFLM"/>
<dbReference type="OrthoDB" id="271164at2759"/>
<dbReference type="PhylomeDB" id="Q9CWK8"/>
<dbReference type="TreeFam" id="TF313698"/>
<dbReference type="Reactome" id="R-MMU-432722">
    <property type="pathway name" value="Golgi Associated Vesicle Biogenesis"/>
</dbReference>
<dbReference type="BioGRID-ORCS" id="67804">
    <property type="hits" value="1 hit in 77 CRISPR screens"/>
</dbReference>
<dbReference type="ChiTaRS" id="Snx2">
    <property type="organism name" value="mouse"/>
</dbReference>
<dbReference type="PRO" id="PR:Q9CWK8"/>
<dbReference type="Proteomes" id="UP000000589">
    <property type="component" value="Chromosome 18"/>
</dbReference>
<dbReference type="RNAct" id="Q9CWK8">
    <property type="molecule type" value="protein"/>
</dbReference>
<dbReference type="Bgee" id="ENSMUSG00000034484">
    <property type="expression patterns" value="Expressed in embryonic cell in blastocyst and 140 other cell types or tissues"/>
</dbReference>
<dbReference type="ExpressionAtlas" id="Q9CWK8">
    <property type="expression patterns" value="baseline and differential"/>
</dbReference>
<dbReference type="GO" id="GO:0005829">
    <property type="term" value="C:cytosol"/>
    <property type="evidence" value="ECO:0007669"/>
    <property type="project" value="GOC"/>
</dbReference>
<dbReference type="GO" id="GO:0031901">
    <property type="term" value="C:early endosome membrane"/>
    <property type="evidence" value="ECO:0007669"/>
    <property type="project" value="UniProtKB-SubCell"/>
</dbReference>
<dbReference type="GO" id="GO:0010008">
    <property type="term" value="C:endosome membrane"/>
    <property type="evidence" value="ECO:0000250"/>
    <property type="project" value="UniProtKB"/>
</dbReference>
<dbReference type="GO" id="GO:0030027">
    <property type="term" value="C:lamellipodium"/>
    <property type="evidence" value="ECO:0007669"/>
    <property type="project" value="UniProtKB-SubCell"/>
</dbReference>
<dbReference type="GO" id="GO:0005764">
    <property type="term" value="C:lysosome"/>
    <property type="evidence" value="ECO:0007669"/>
    <property type="project" value="Ensembl"/>
</dbReference>
<dbReference type="GO" id="GO:0016020">
    <property type="term" value="C:membrane"/>
    <property type="evidence" value="ECO:0000314"/>
    <property type="project" value="UniProtKB"/>
</dbReference>
<dbReference type="GO" id="GO:0030905">
    <property type="term" value="C:retromer, tubulation complex"/>
    <property type="evidence" value="ECO:0007669"/>
    <property type="project" value="Ensembl"/>
</dbReference>
<dbReference type="GO" id="GO:0005154">
    <property type="term" value="F:epidermal growth factor receptor binding"/>
    <property type="evidence" value="ECO:0007669"/>
    <property type="project" value="Ensembl"/>
</dbReference>
<dbReference type="GO" id="GO:0005158">
    <property type="term" value="F:insulin receptor binding"/>
    <property type="evidence" value="ECO:0007669"/>
    <property type="project" value="Ensembl"/>
</dbReference>
<dbReference type="GO" id="GO:1990460">
    <property type="term" value="F:leptin receptor binding"/>
    <property type="evidence" value="ECO:0007669"/>
    <property type="project" value="Ensembl"/>
</dbReference>
<dbReference type="GO" id="GO:0035091">
    <property type="term" value="F:phosphatidylinositol binding"/>
    <property type="evidence" value="ECO:0007669"/>
    <property type="project" value="InterPro"/>
</dbReference>
<dbReference type="GO" id="GO:0046982">
    <property type="term" value="F:protein heterodimerization activity"/>
    <property type="evidence" value="ECO:0007669"/>
    <property type="project" value="Ensembl"/>
</dbReference>
<dbReference type="GO" id="GO:0042803">
    <property type="term" value="F:protein homodimerization activity"/>
    <property type="evidence" value="ECO:0007669"/>
    <property type="project" value="Ensembl"/>
</dbReference>
<dbReference type="GO" id="GO:1990459">
    <property type="term" value="F:transferrin receptor binding"/>
    <property type="evidence" value="ECO:0007669"/>
    <property type="project" value="Ensembl"/>
</dbReference>
<dbReference type="GO" id="GO:0006886">
    <property type="term" value="P:intracellular protein transport"/>
    <property type="evidence" value="ECO:0007669"/>
    <property type="project" value="InterPro"/>
</dbReference>
<dbReference type="GO" id="GO:0072673">
    <property type="term" value="P:lamellipodium morphogenesis"/>
    <property type="evidence" value="ECO:0000250"/>
    <property type="project" value="UniProtKB"/>
</dbReference>
<dbReference type="GO" id="GO:0042147">
    <property type="term" value="P:retrograde transport, endosome to Golgi"/>
    <property type="evidence" value="ECO:0000250"/>
    <property type="project" value="UniProtKB"/>
</dbReference>
<dbReference type="CDD" id="cd07282">
    <property type="entry name" value="PX_SNX2"/>
    <property type="match status" value="1"/>
</dbReference>
<dbReference type="FunFam" id="1.20.1270.60:FF:000012">
    <property type="entry name" value="Sorting nexin 2"/>
    <property type="match status" value="1"/>
</dbReference>
<dbReference type="FunFam" id="3.30.1520.10:FF:000016">
    <property type="entry name" value="Sorting nexin 2"/>
    <property type="match status" value="1"/>
</dbReference>
<dbReference type="Gene3D" id="1.20.1270.60">
    <property type="entry name" value="Arfaptin homology (AH) domain/BAR domain"/>
    <property type="match status" value="1"/>
</dbReference>
<dbReference type="Gene3D" id="3.30.1520.10">
    <property type="entry name" value="Phox-like domain"/>
    <property type="match status" value="1"/>
</dbReference>
<dbReference type="InterPro" id="IPR027267">
    <property type="entry name" value="AH/BAR_dom_sf"/>
</dbReference>
<dbReference type="InterPro" id="IPR001683">
    <property type="entry name" value="PX_dom"/>
</dbReference>
<dbReference type="InterPro" id="IPR036871">
    <property type="entry name" value="PX_dom_sf"/>
</dbReference>
<dbReference type="InterPro" id="IPR037918">
    <property type="entry name" value="SNX2_PX"/>
</dbReference>
<dbReference type="InterPro" id="IPR005329">
    <property type="entry name" value="Sorting_nexin_N"/>
</dbReference>
<dbReference type="InterPro" id="IPR015404">
    <property type="entry name" value="Vps5_C"/>
</dbReference>
<dbReference type="PANTHER" id="PTHR10555">
    <property type="entry name" value="SORTING NEXIN"/>
    <property type="match status" value="1"/>
</dbReference>
<dbReference type="PANTHER" id="PTHR10555:SF31">
    <property type="entry name" value="SORTING NEXIN-2"/>
    <property type="match status" value="1"/>
</dbReference>
<dbReference type="Pfam" id="PF00787">
    <property type="entry name" value="PX"/>
    <property type="match status" value="1"/>
</dbReference>
<dbReference type="Pfam" id="PF03700">
    <property type="entry name" value="Sorting_nexin"/>
    <property type="match status" value="1"/>
</dbReference>
<dbReference type="Pfam" id="PF09325">
    <property type="entry name" value="Vps5"/>
    <property type="match status" value="1"/>
</dbReference>
<dbReference type="SMART" id="SM00312">
    <property type="entry name" value="PX"/>
    <property type="match status" value="1"/>
</dbReference>
<dbReference type="SUPFAM" id="SSF103657">
    <property type="entry name" value="BAR/IMD domain-like"/>
    <property type="match status" value="1"/>
</dbReference>
<dbReference type="SUPFAM" id="SSF64268">
    <property type="entry name" value="PX domain"/>
    <property type="match status" value="1"/>
</dbReference>
<dbReference type="PROSITE" id="PS50195">
    <property type="entry name" value="PX"/>
    <property type="match status" value="1"/>
</dbReference>
<gene>
    <name type="primary">Snx2</name>
</gene>
<keyword id="KW-0007">Acetylation</keyword>
<keyword id="KW-0966">Cell projection</keyword>
<keyword id="KW-0967">Endosome</keyword>
<keyword id="KW-0446">Lipid-binding</keyword>
<keyword id="KW-0472">Membrane</keyword>
<keyword id="KW-0597">Phosphoprotein</keyword>
<keyword id="KW-0653">Protein transport</keyword>
<keyword id="KW-1185">Reference proteome</keyword>
<keyword id="KW-0813">Transport</keyword>
<protein>
    <recommendedName>
        <fullName>Sorting nexin-2</fullName>
    </recommendedName>
</protein>
<comment type="function">
    <text evidence="1">Involved in several stages of intracellular trafficking. Interacts with membranes containing phosphatidylinositol 3-phosphate (PtdIns(3P)) or phosphatidylinositol 3,5-bisphosphate (PtdIns(3,5)P2). Acts in part as component of the retromer membrane-deforming SNX-BAR subcomplex. The SNX-BAR retromer mediates retrograde transport of cargo proteins from endosomes to the trans-Golgi network (TGN) and is involved in endosome-to-plasma membrane transport for cargo protein recycling. The SNX-BAR subcomplex functions to deform the donor membrane into a tubular profile called endosome-to-TGN transport carrier (ETC). Can sense membrane curvature and has in vitro vesicle-to-membrane remodeling activity. Required for retrograde endosome-to-TGN transport of TGN38. Promotes KALRN- and RHOG-dependent but retromer-independent membrane remodeling such as lamellipodium formation; the function is dependent on GEF activity of KALRN (By similarity).</text>
</comment>
<comment type="subunit">
    <text evidence="1">Predominantly forms heterodimers with BAR domain-containing sorting nexins SNX5, SNX6 and SNX32; can self-associate to form homodimers. The heterodimers are proposed to self-assemble into helical arrays on the membrane to stabilize and expand local membrane curvature underlying endosomal tubule formation. Thought to be a component of the originally described retromer complex (also called SNX-BAR retromer) which is a pentamer containing the heterotrimeric retromer cargo-selective complex (CSC), also described as vacuolar protein sorting subcomplex (VPS), and a heterodimeric membrane-deforming subcomplex formed between SNX1 or SNX2 and SNX5 or SNX6 (also called SNX-BAR subcomplex); the respective CSC and SNX-BAR subcomplexes associate with low affinity. Interacts with SNX5, SNX6, SNX32, VPS26A, VPS29, VPS35, FNBP1, KALRN, RHOG (GDP-bound form) (By similarity).</text>
</comment>
<comment type="subcellular location">
    <subcellularLocation>
        <location>Early endosome membrane</location>
        <topology>Peripheral membrane protein</topology>
        <orientation evidence="1">Cytoplasmic side</orientation>
    </subcellularLocation>
    <subcellularLocation>
        <location>Cell projection</location>
        <location>Lamellipodium</location>
    </subcellularLocation>
    <text evidence="1">Colocalized with SORT1 to tubular endosomal membrane structures called endosome-to-TGN transport carriers (ETCs) which are budding from early endosome vacuoles just before maturing into late endosome vacuoles. Colocalized with F-actin at the leading edge of lamellipodia in cells in a KALRN-dependent manner (By similarity).</text>
</comment>
<comment type="domain">
    <text evidence="1">The BAR domain is able to sense membrane curvature upon dimerization. Membrane remodeling seems to implicate insertion of a N-terminal amphipathic helix (AH) in the membrane (By similarity).</text>
</comment>
<comment type="disruption phenotype">
    <text evidence="6">No visible phenotype. Mice are born at the expected Mendelian ratio and are fertile. Mice lacking both Snx1 and Snx2 die during embryonic development, around 9.5 and 11.5 dpc.</text>
</comment>
<comment type="similarity">
    <text evidence="7">Belongs to the sorting nexin family.</text>
</comment>
<organism>
    <name type="scientific">Mus musculus</name>
    <name type="common">Mouse</name>
    <dbReference type="NCBI Taxonomy" id="10090"/>
    <lineage>
        <taxon>Eukaryota</taxon>
        <taxon>Metazoa</taxon>
        <taxon>Chordata</taxon>
        <taxon>Craniata</taxon>
        <taxon>Vertebrata</taxon>
        <taxon>Euteleostomi</taxon>
        <taxon>Mammalia</taxon>
        <taxon>Eutheria</taxon>
        <taxon>Euarchontoglires</taxon>
        <taxon>Glires</taxon>
        <taxon>Rodentia</taxon>
        <taxon>Myomorpha</taxon>
        <taxon>Muroidea</taxon>
        <taxon>Muridae</taxon>
        <taxon>Murinae</taxon>
        <taxon>Mus</taxon>
        <taxon>Mus</taxon>
    </lineage>
</organism>
<evidence type="ECO:0000250" key="1">
    <source>
        <dbReference type="UniProtKB" id="O60749"/>
    </source>
</evidence>
<evidence type="ECO:0000250" key="2">
    <source>
        <dbReference type="UniProtKB" id="Q13596"/>
    </source>
</evidence>
<evidence type="ECO:0000250" key="3">
    <source>
        <dbReference type="UniProtKB" id="Q96L94"/>
    </source>
</evidence>
<evidence type="ECO:0000255" key="4">
    <source>
        <dbReference type="PROSITE-ProRule" id="PRU00147"/>
    </source>
</evidence>
<evidence type="ECO:0000256" key="5">
    <source>
        <dbReference type="SAM" id="MobiDB-lite"/>
    </source>
</evidence>
<evidence type="ECO:0000269" key="6">
    <source>
    </source>
</evidence>
<evidence type="ECO:0000305" key="7"/>
<evidence type="ECO:0007744" key="8">
    <source>
    </source>
</evidence>
<evidence type="ECO:0007744" key="9">
    <source>
    </source>
</evidence>
<accession>Q9CWK8</accession>
<accession>Q3UKW3</accession>
<accession>Q9CQV0</accession>
<feature type="chain" id="PRO_0000213839" description="Sorting nexin-2">
    <location>
        <begin position="1"/>
        <end position="519"/>
    </location>
</feature>
<feature type="domain" description="PX" evidence="4">
    <location>
        <begin position="140"/>
        <end position="269"/>
    </location>
</feature>
<feature type="domain" description="BAR" evidence="2">
    <location>
        <begin position="299"/>
        <end position="519"/>
    </location>
</feature>
<feature type="region of interest" description="Disordered" evidence="5">
    <location>
        <begin position="30"/>
        <end position="62"/>
    </location>
</feature>
<feature type="region of interest" description="Interaction with RhoG" evidence="1">
    <location>
        <begin position="260"/>
        <end position="519"/>
    </location>
</feature>
<feature type="region of interest" description="Membrane-binding amphipathic helix" evidence="1">
    <location>
        <begin position="278"/>
        <end position="295"/>
    </location>
</feature>
<feature type="compositionally biased region" description="Low complexity" evidence="5">
    <location>
        <begin position="30"/>
        <end position="50"/>
    </location>
</feature>
<feature type="binding site" evidence="3">
    <location>
        <position position="183"/>
    </location>
    <ligand>
        <name>a 1,2-diacyl-sn-glycero-3-phospho-(1D-myo-inositol-3-phosphate)</name>
        <dbReference type="ChEBI" id="CHEBI:58088"/>
    </ligand>
</feature>
<feature type="binding site" evidence="3">
    <location>
        <position position="185"/>
    </location>
    <ligand>
        <name>a 1,2-diacyl-sn-glycero-3-phospho-(1D-myo-inositol-3-phosphate)</name>
        <dbReference type="ChEBI" id="CHEBI:58088"/>
    </ligand>
</feature>
<feature type="binding site" evidence="3">
    <location>
        <position position="211"/>
    </location>
    <ligand>
        <name>a 1,2-diacyl-sn-glycero-3-phospho-(1D-myo-inositol-3-phosphate)</name>
        <dbReference type="ChEBI" id="CHEBI:58088"/>
    </ligand>
</feature>
<feature type="binding site" evidence="3">
    <location>
        <position position="235"/>
    </location>
    <ligand>
        <name>a 1,2-diacyl-sn-glycero-3-phospho-(1D-myo-inositol-3-phosphate)</name>
        <dbReference type="ChEBI" id="CHEBI:58088"/>
    </ligand>
</feature>
<feature type="modified residue" description="Phosphoserine" evidence="9">
    <location>
        <position position="97"/>
    </location>
</feature>
<feature type="modified residue" description="Phosphothreonine" evidence="9">
    <location>
        <position position="101"/>
    </location>
</feature>
<feature type="modified residue" description="Phosphothreonine" evidence="9">
    <location>
        <position position="104"/>
    </location>
</feature>
<feature type="modified residue" description="Phosphoserine" evidence="1">
    <location>
        <position position="117"/>
    </location>
</feature>
<feature type="modified residue" description="Phosphoserine" evidence="8 9">
    <location>
        <position position="119"/>
    </location>
</feature>
<feature type="modified residue" description="Phosphoserine" evidence="9">
    <location>
        <position position="185"/>
    </location>
</feature>
<feature type="modified residue" description="Phosphoserine" evidence="1">
    <location>
        <position position="277"/>
    </location>
</feature>
<feature type="modified residue" description="N6-acetyllysine" evidence="1">
    <location>
        <position position="469"/>
    </location>
</feature>
<feature type="sequence conflict" description="In Ref. 1; BAB27035." evidence="7" ref="1">
    <original>R</original>
    <variation>I</variation>
    <location>
        <position position="245"/>
    </location>
</feature>
<feature type="sequence conflict" description="In Ref. 1; BAB27035." evidence="7" ref="1">
    <original>R</original>
    <variation>P</variation>
    <location>
        <position position="428"/>
    </location>
</feature>
<reference key="1">
    <citation type="journal article" date="2005" name="Science">
        <title>The transcriptional landscape of the mammalian genome.</title>
        <authorList>
            <person name="Carninci P."/>
            <person name="Kasukawa T."/>
            <person name="Katayama S."/>
            <person name="Gough J."/>
            <person name="Frith M.C."/>
            <person name="Maeda N."/>
            <person name="Oyama R."/>
            <person name="Ravasi T."/>
            <person name="Lenhard B."/>
            <person name="Wells C."/>
            <person name="Kodzius R."/>
            <person name="Shimokawa K."/>
            <person name="Bajic V.B."/>
            <person name="Brenner S.E."/>
            <person name="Batalov S."/>
            <person name="Forrest A.R."/>
            <person name="Zavolan M."/>
            <person name="Davis M.J."/>
            <person name="Wilming L.G."/>
            <person name="Aidinis V."/>
            <person name="Allen J.E."/>
            <person name="Ambesi-Impiombato A."/>
            <person name="Apweiler R."/>
            <person name="Aturaliya R.N."/>
            <person name="Bailey T.L."/>
            <person name="Bansal M."/>
            <person name="Baxter L."/>
            <person name="Beisel K.W."/>
            <person name="Bersano T."/>
            <person name="Bono H."/>
            <person name="Chalk A.M."/>
            <person name="Chiu K.P."/>
            <person name="Choudhary V."/>
            <person name="Christoffels A."/>
            <person name="Clutterbuck D.R."/>
            <person name="Crowe M.L."/>
            <person name="Dalla E."/>
            <person name="Dalrymple B.P."/>
            <person name="de Bono B."/>
            <person name="Della Gatta G."/>
            <person name="di Bernardo D."/>
            <person name="Down T."/>
            <person name="Engstrom P."/>
            <person name="Fagiolini M."/>
            <person name="Faulkner G."/>
            <person name="Fletcher C.F."/>
            <person name="Fukushima T."/>
            <person name="Furuno M."/>
            <person name="Futaki S."/>
            <person name="Gariboldi M."/>
            <person name="Georgii-Hemming P."/>
            <person name="Gingeras T.R."/>
            <person name="Gojobori T."/>
            <person name="Green R.E."/>
            <person name="Gustincich S."/>
            <person name="Harbers M."/>
            <person name="Hayashi Y."/>
            <person name="Hensch T.K."/>
            <person name="Hirokawa N."/>
            <person name="Hill D."/>
            <person name="Huminiecki L."/>
            <person name="Iacono M."/>
            <person name="Ikeo K."/>
            <person name="Iwama A."/>
            <person name="Ishikawa T."/>
            <person name="Jakt M."/>
            <person name="Kanapin A."/>
            <person name="Katoh M."/>
            <person name="Kawasawa Y."/>
            <person name="Kelso J."/>
            <person name="Kitamura H."/>
            <person name="Kitano H."/>
            <person name="Kollias G."/>
            <person name="Krishnan S.P."/>
            <person name="Kruger A."/>
            <person name="Kummerfeld S.K."/>
            <person name="Kurochkin I.V."/>
            <person name="Lareau L.F."/>
            <person name="Lazarevic D."/>
            <person name="Lipovich L."/>
            <person name="Liu J."/>
            <person name="Liuni S."/>
            <person name="McWilliam S."/>
            <person name="Madan Babu M."/>
            <person name="Madera M."/>
            <person name="Marchionni L."/>
            <person name="Matsuda H."/>
            <person name="Matsuzawa S."/>
            <person name="Miki H."/>
            <person name="Mignone F."/>
            <person name="Miyake S."/>
            <person name="Morris K."/>
            <person name="Mottagui-Tabar S."/>
            <person name="Mulder N."/>
            <person name="Nakano N."/>
            <person name="Nakauchi H."/>
            <person name="Ng P."/>
            <person name="Nilsson R."/>
            <person name="Nishiguchi S."/>
            <person name="Nishikawa S."/>
            <person name="Nori F."/>
            <person name="Ohara O."/>
            <person name="Okazaki Y."/>
            <person name="Orlando V."/>
            <person name="Pang K.C."/>
            <person name="Pavan W.J."/>
            <person name="Pavesi G."/>
            <person name="Pesole G."/>
            <person name="Petrovsky N."/>
            <person name="Piazza S."/>
            <person name="Reed J."/>
            <person name="Reid J.F."/>
            <person name="Ring B.Z."/>
            <person name="Ringwald M."/>
            <person name="Rost B."/>
            <person name="Ruan Y."/>
            <person name="Salzberg S.L."/>
            <person name="Sandelin A."/>
            <person name="Schneider C."/>
            <person name="Schoenbach C."/>
            <person name="Sekiguchi K."/>
            <person name="Semple C.A."/>
            <person name="Seno S."/>
            <person name="Sessa L."/>
            <person name="Sheng Y."/>
            <person name="Shibata Y."/>
            <person name="Shimada H."/>
            <person name="Shimada K."/>
            <person name="Silva D."/>
            <person name="Sinclair B."/>
            <person name="Sperling S."/>
            <person name="Stupka E."/>
            <person name="Sugiura K."/>
            <person name="Sultana R."/>
            <person name="Takenaka Y."/>
            <person name="Taki K."/>
            <person name="Tammoja K."/>
            <person name="Tan S.L."/>
            <person name="Tang S."/>
            <person name="Taylor M.S."/>
            <person name="Tegner J."/>
            <person name="Teichmann S.A."/>
            <person name="Ueda H.R."/>
            <person name="van Nimwegen E."/>
            <person name="Verardo R."/>
            <person name="Wei C.L."/>
            <person name="Yagi K."/>
            <person name="Yamanishi H."/>
            <person name="Zabarovsky E."/>
            <person name="Zhu S."/>
            <person name="Zimmer A."/>
            <person name="Hide W."/>
            <person name="Bult C."/>
            <person name="Grimmond S.M."/>
            <person name="Teasdale R.D."/>
            <person name="Liu E.T."/>
            <person name="Brusic V."/>
            <person name="Quackenbush J."/>
            <person name="Wahlestedt C."/>
            <person name="Mattick J.S."/>
            <person name="Hume D.A."/>
            <person name="Kai C."/>
            <person name="Sasaki D."/>
            <person name="Tomaru Y."/>
            <person name="Fukuda S."/>
            <person name="Kanamori-Katayama M."/>
            <person name="Suzuki M."/>
            <person name="Aoki J."/>
            <person name="Arakawa T."/>
            <person name="Iida J."/>
            <person name="Imamura K."/>
            <person name="Itoh M."/>
            <person name="Kato T."/>
            <person name="Kawaji H."/>
            <person name="Kawagashira N."/>
            <person name="Kawashima T."/>
            <person name="Kojima M."/>
            <person name="Kondo S."/>
            <person name="Konno H."/>
            <person name="Nakano K."/>
            <person name="Ninomiya N."/>
            <person name="Nishio T."/>
            <person name="Okada M."/>
            <person name="Plessy C."/>
            <person name="Shibata K."/>
            <person name="Shiraki T."/>
            <person name="Suzuki S."/>
            <person name="Tagami M."/>
            <person name="Waki K."/>
            <person name="Watahiki A."/>
            <person name="Okamura-Oho Y."/>
            <person name="Suzuki H."/>
            <person name="Kawai J."/>
            <person name="Hayashizaki Y."/>
        </authorList>
    </citation>
    <scope>NUCLEOTIDE SEQUENCE [LARGE SCALE MRNA]</scope>
    <source>
        <strain>C57BL/6J</strain>
        <tissue>Embryonic stem cell</tissue>
        <tissue>Kidney</tissue>
        <tissue>Placenta</tissue>
    </source>
</reference>
<reference key="2">
    <citation type="journal article" date="2002" name="Mol. Biol. Cell">
        <title>Genetic analysis of sorting nexins 1 and 2 reveals a redundant and essential function in mice.</title>
        <authorList>
            <person name="Schwarz D.G."/>
            <person name="Griffin C.T."/>
            <person name="Schneider E.A."/>
            <person name="Yee D."/>
            <person name="Magnuson T."/>
        </authorList>
    </citation>
    <scope>DISRUPTION PHENOTYPE</scope>
</reference>
<reference key="3">
    <citation type="journal article" date="2007" name="Proc. Natl. Acad. Sci. U.S.A.">
        <title>Large-scale phosphorylation analysis of mouse liver.</title>
        <authorList>
            <person name="Villen J."/>
            <person name="Beausoleil S.A."/>
            <person name="Gerber S.A."/>
            <person name="Gygi S.P."/>
        </authorList>
    </citation>
    <scope>PHOSPHORYLATION [LARGE SCALE ANALYSIS] AT SER-119</scope>
    <scope>IDENTIFICATION BY MASS SPECTROMETRY [LARGE SCALE ANALYSIS]</scope>
    <source>
        <tissue>Liver</tissue>
    </source>
</reference>
<reference key="4">
    <citation type="journal article" date="2010" name="Cell">
        <title>A tissue-specific atlas of mouse protein phosphorylation and expression.</title>
        <authorList>
            <person name="Huttlin E.L."/>
            <person name="Jedrychowski M.P."/>
            <person name="Elias J.E."/>
            <person name="Goswami T."/>
            <person name="Rad R."/>
            <person name="Beausoleil S.A."/>
            <person name="Villen J."/>
            <person name="Haas W."/>
            <person name="Sowa M.E."/>
            <person name="Gygi S.P."/>
        </authorList>
    </citation>
    <scope>PHOSPHORYLATION [LARGE SCALE ANALYSIS] AT SER-97; THR-101; THR-104; SER-119 AND SER-185</scope>
    <scope>IDENTIFICATION BY MASS SPECTROMETRY [LARGE SCALE ANALYSIS]</scope>
    <source>
        <tissue>Brain</tissue>
        <tissue>Brown adipose tissue</tissue>
        <tissue>Heart</tissue>
        <tissue>Kidney</tissue>
        <tissue>Liver</tissue>
        <tissue>Lung</tissue>
        <tissue>Pancreas</tissue>
        <tissue>Spleen</tissue>
        <tissue>Testis</tissue>
    </source>
</reference>
<sequence length="519" mass="58471">MAAEREPPPLGDVKPTDFEELEDGEDLFTSTVSTLESSPSSPEPASLPAEDISANSNGSKPVEVVLDDDREDLFAEATEEVSLDSPERELILSSEPSPAVTPVTPTTLIAPRIESKSISAPVIFDRSRDEIEEEANGDIFDIEIGVSDPEKVGDGMNAYMAYRVTTKTSLSMFSKSEFSVKRRFSDFLGLHSKLASKYLHVGYIVPPAPEKSIVGMTKVKVGKEDSSSTEFVEKRRAALERYLQRTVKHPTLLQDPDLRQFLESSELPRAVNTQALSGAGILRMVNKAADAVNKMTIKMNESDAWFEEKQQQFENLDQQLRKLHASVEALVCHRKELSANTAAFAKSAAMLGNSEDHTALSRALSQLAEVEEKIDQLHQEQAFADFYMFSELLSDYIRLIAAVKGVFDHRMKCWQKWEDAQITLLKKRETEAKMMVANKPDKIQQAKNEIREWEAKVQQGERDFEQISKTIRKEVGRFEKERVKDFKAVIIKYLESLVQTQQQLIKYWEAFLPEAKAIA</sequence>